<comment type="function">
    <text evidence="2">GTP hydrolase that promotes the GTP-dependent binding of aminoacyl-tRNA to the A-site of ribosomes during protein biosynthesis.</text>
</comment>
<comment type="catalytic activity">
    <reaction evidence="2">
        <text>GTP + H2O = GDP + phosphate + H(+)</text>
        <dbReference type="Rhea" id="RHEA:19669"/>
        <dbReference type="ChEBI" id="CHEBI:15377"/>
        <dbReference type="ChEBI" id="CHEBI:15378"/>
        <dbReference type="ChEBI" id="CHEBI:37565"/>
        <dbReference type="ChEBI" id="CHEBI:43474"/>
        <dbReference type="ChEBI" id="CHEBI:58189"/>
        <dbReference type="EC" id="3.6.5.3"/>
    </reaction>
    <physiologicalReaction direction="left-to-right" evidence="2">
        <dbReference type="Rhea" id="RHEA:19670"/>
    </physiologicalReaction>
</comment>
<comment type="subcellular location">
    <subcellularLocation>
        <location evidence="2">Cytoplasm</location>
    </subcellularLocation>
</comment>
<comment type="similarity">
    <text evidence="2">Belongs to the TRAFAC class translation factor GTPase superfamily. Classic translation factor GTPase family. EF-Tu/EF-1A subfamily.</text>
</comment>
<name>EF1A_PICTO</name>
<evidence type="ECO:0000250" key="1"/>
<evidence type="ECO:0000255" key="2">
    <source>
        <dbReference type="HAMAP-Rule" id="MF_00118"/>
    </source>
</evidence>
<dbReference type="EC" id="3.6.5.3" evidence="2"/>
<dbReference type="EMBL" id="AE017261">
    <property type="protein sequence ID" value="AAT43000.1"/>
    <property type="molecule type" value="Genomic_DNA"/>
</dbReference>
<dbReference type="RefSeq" id="WP_011177216.1">
    <property type="nucleotide sequence ID" value="NC_005877.1"/>
</dbReference>
<dbReference type="SMR" id="Q6L202"/>
<dbReference type="FunCoup" id="Q6L202">
    <property type="interactions" value="111"/>
</dbReference>
<dbReference type="STRING" id="263820.PTO0415"/>
<dbReference type="PaxDb" id="263820-PTO0415"/>
<dbReference type="GeneID" id="2843914"/>
<dbReference type="KEGG" id="pto:PTO0415"/>
<dbReference type="PATRIC" id="fig|263820.9.peg.440"/>
<dbReference type="eggNOG" id="arCOG01561">
    <property type="taxonomic scope" value="Archaea"/>
</dbReference>
<dbReference type="HOGENOM" id="CLU_007265_3_5_2"/>
<dbReference type="InParanoid" id="Q6L202"/>
<dbReference type="OrthoDB" id="371718at2157"/>
<dbReference type="Proteomes" id="UP000000438">
    <property type="component" value="Chromosome"/>
</dbReference>
<dbReference type="GO" id="GO:0005737">
    <property type="term" value="C:cytoplasm"/>
    <property type="evidence" value="ECO:0007669"/>
    <property type="project" value="UniProtKB-SubCell"/>
</dbReference>
<dbReference type="GO" id="GO:0005525">
    <property type="term" value="F:GTP binding"/>
    <property type="evidence" value="ECO:0007669"/>
    <property type="project" value="UniProtKB-UniRule"/>
</dbReference>
<dbReference type="GO" id="GO:0003924">
    <property type="term" value="F:GTPase activity"/>
    <property type="evidence" value="ECO:0007669"/>
    <property type="project" value="InterPro"/>
</dbReference>
<dbReference type="GO" id="GO:0003746">
    <property type="term" value="F:translation elongation factor activity"/>
    <property type="evidence" value="ECO:0007669"/>
    <property type="project" value="UniProtKB-UniRule"/>
</dbReference>
<dbReference type="CDD" id="cd01883">
    <property type="entry name" value="EF1_alpha"/>
    <property type="match status" value="1"/>
</dbReference>
<dbReference type="CDD" id="cd03693">
    <property type="entry name" value="EF1_alpha_II"/>
    <property type="match status" value="1"/>
</dbReference>
<dbReference type="CDD" id="cd03705">
    <property type="entry name" value="EF1_alpha_III"/>
    <property type="match status" value="1"/>
</dbReference>
<dbReference type="FunFam" id="2.40.30.10:FF:000003">
    <property type="entry name" value="Elongation factor 1-alpha"/>
    <property type="match status" value="1"/>
</dbReference>
<dbReference type="FunFam" id="2.40.30.10:FF:000005">
    <property type="entry name" value="Elongation factor 1-alpha"/>
    <property type="match status" value="1"/>
</dbReference>
<dbReference type="Gene3D" id="3.40.50.300">
    <property type="entry name" value="P-loop containing nucleotide triphosphate hydrolases"/>
    <property type="match status" value="1"/>
</dbReference>
<dbReference type="Gene3D" id="2.40.30.10">
    <property type="entry name" value="Translation factors"/>
    <property type="match status" value="2"/>
</dbReference>
<dbReference type="HAMAP" id="MF_00118_A">
    <property type="entry name" value="EF_Tu_A"/>
    <property type="match status" value="1"/>
</dbReference>
<dbReference type="InterPro" id="IPR004161">
    <property type="entry name" value="EFTu-like_2"/>
</dbReference>
<dbReference type="InterPro" id="IPR031157">
    <property type="entry name" value="G_TR_CS"/>
</dbReference>
<dbReference type="InterPro" id="IPR054696">
    <property type="entry name" value="GTP-eEF1A_C"/>
</dbReference>
<dbReference type="InterPro" id="IPR027417">
    <property type="entry name" value="P-loop_NTPase"/>
</dbReference>
<dbReference type="InterPro" id="IPR005225">
    <property type="entry name" value="Small_GTP-bd"/>
</dbReference>
<dbReference type="InterPro" id="IPR000795">
    <property type="entry name" value="T_Tr_GTP-bd_dom"/>
</dbReference>
<dbReference type="InterPro" id="IPR050100">
    <property type="entry name" value="TRAFAC_GTPase_members"/>
</dbReference>
<dbReference type="InterPro" id="IPR009000">
    <property type="entry name" value="Transl_B-barrel_sf"/>
</dbReference>
<dbReference type="InterPro" id="IPR009001">
    <property type="entry name" value="Transl_elong_EF1A/Init_IF2_C"/>
</dbReference>
<dbReference type="InterPro" id="IPR004539">
    <property type="entry name" value="Transl_elong_EF1A_euk/arc"/>
</dbReference>
<dbReference type="NCBIfam" id="TIGR00483">
    <property type="entry name" value="EF-1_alpha"/>
    <property type="match status" value="1"/>
</dbReference>
<dbReference type="NCBIfam" id="NF008969">
    <property type="entry name" value="PRK12317.1"/>
    <property type="match status" value="1"/>
</dbReference>
<dbReference type="NCBIfam" id="TIGR00231">
    <property type="entry name" value="small_GTP"/>
    <property type="match status" value="1"/>
</dbReference>
<dbReference type="PANTHER" id="PTHR23115">
    <property type="entry name" value="TRANSLATION FACTOR"/>
    <property type="match status" value="1"/>
</dbReference>
<dbReference type="Pfam" id="PF22594">
    <property type="entry name" value="GTP-eEF1A_C"/>
    <property type="match status" value="1"/>
</dbReference>
<dbReference type="Pfam" id="PF00009">
    <property type="entry name" value="GTP_EFTU"/>
    <property type="match status" value="1"/>
</dbReference>
<dbReference type="Pfam" id="PF03144">
    <property type="entry name" value="GTP_EFTU_D2"/>
    <property type="match status" value="1"/>
</dbReference>
<dbReference type="PRINTS" id="PR00315">
    <property type="entry name" value="ELONGATNFCT"/>
</dbReference>
<dbReference type="SUPFAM" id="SSF50465">
    <property type="entry name" value="EF-Tu/eEF-1alpha/eIF2-gamma C-terminal domain"/>
    <property type="match status" value="1"/>
</dbReference>
<dbReference type="SUPFAM" id="SSF52540">
    <property type="entry name" value="P-loop containing nucleoside triphosphate hydrolases"/>
    <property type="match status" value="1"/>
</dbReference>
<dbReference type="SUPFAM" id="SSF50447">
    <property type="entry name" value="Translation proteins"/>
    <property type="match status" value="1"/>
</dbReference>
<dbReference type="PROSITE" id="PS00301">
    <property type="entry name" value="G_TR_1"/>
    <property type="match status" value="1"/>
</dbReference>
<dbReference type="PROSITE" id="PS51722">
    <property type="entry name" value="G_TR_2"/>
    <property type="match status" value="1"/>
</dbReference>
<gene>
    <name evidence="2" type="primary">tuf</name>
    <name type="ordered locus">PTO0415</name>
</gene>
<sequence length="424" mass="46705">MASEKPHMNLVIIGHVDHGKSTLVGRLLFEHGEIPQHIIDEYKKEAEEKGKATFEFAWVMDRFKEERERGVTIDLTHRKFETDKYYFTIIDAPGHRDFVKNMITGTSQADAAVLVVSAREGEGVMAQTKEHAFLARTLGVPQLIAVVNKMDATQPPYSEKRFNEVKDEITKLLTPIGFKNVPIIPLSGYKGDNIMKPSPNLSWWKGPTLMEALNALQVPAKPVDKPLRLPVEDVYSITGIGTVPVGRIETGVMKVGDKVIFMPANKAGDVKSIEMHHEPMQQAGPGDNIGFNVRGIAKNELKRGDVCGPANNPPTVVKGFTAQIVVLNHPSVIAAGYKPVFHVHTAQVACRIDEIVKTINPKDGTTLKEKPDFIKTGDIAIVKVVPDRALVIEKVSEFPQLGRFAIRDMGMTVAAGQCIDLEKA</sequence>
<keyword id="KW-0963">Cytoplasm</keyword>
<keyword id="KW-0251">Elongation factor</keyword>
<keyword id="KW-0342">GTP-binding</keyword>
<keyword id="KW-0378">Hydrolase</keyword>
<keyword id="KW-0460">Magnesium</keyword>
<keyword id="KW-0479">Metal-binding</keyword>
<keyword id="KW-0547">Nucleotide-binding</keyword>
<keyword id="KW-0648">Protein biosynthesis</keyword>
<protein>
    <recommendedName>
        <fullName evidence="2">Elongation factor 1-alpha</fullName>
        <shortName evidence="2">EF-1-alpha</shortName>
        <ecNumber evidence="2">3.6.5.3</ecNumber>
    </recommendedName>
    <alternativeName>
        <fullName evidence="2">Elongation factor Tu</fullName>
        <shortName evidence="2">EF-Tu</shortName>
    </alternativeName>
</protein>
<organism>
    <name type="scientific">Picrophilus torridus (strain ATCC 700027 / DSM 9790 / JCM 10055 / NBRC 100828 / KAW 2/3)</name>
    <dbReference type="NCBI Taxonomy" id="1122961"/>
    <lineage>
        <taxon>Archaea</taxon>
        <taxon>Methanobacteriati</taxon>
        <taxon>Thermoplasmatota</taxon>
        <taxon>Thermoplasmata</taxon>
        <taxon>Thermoplasmatales</taxon>
        <taxon>Picrophilaceae</taxon>
        <taxon>Picrophilus</taxon>
    </lineage>
</organism>
<accession>Q6L202</accession>
<proteinExistence type="inferred from homology"/>
<feature type="chain" id="PRO_0000090986" description="Elongation factor 1-alpha">
    <location>
        <begin position="1"/>
        <end position="424"/>
    </location>
</feature>
<feature type="domain" description="tr-type G">
    <location>
        <begin position="5"/>
        <end position="223"/>
    </location>
</feature>
<feature type="region of interest" description="G1" evidence="1">
    <location>
        <begin position="14"/>
        <end position="21"/>
    </location>
</feature>
<feature type="region of interest" description="G2" evidence="1">
    <location>
        <begin position="70"/>
        <end position="74"/>
    </location>
</feature>
<feature type="region of interest" description="G3" evidence="1">
    <location>
        <begin position="91"/>
        <end position="94"/>
    </location>
</feature>
<feature type="region of interest" description="G4" evidence="1">
    <location>
        <begin position="148"/>
        <end position="151"/>
    </location>
</feature>
<feature type="region of interest" description="G5" evidence="1">
    <location>
        <begin position="187"/>
        <end position="189"/>
    </location>
</feature>
<feature type="binding site" evidence="2">
    <location>
        <begin position="14"/>
        <end position="21"/>
    </location>
    <ligand>
        <name>GTP</name>
        <dbReference type="ChEBI" id="CHEBI:37565"/>
    </ligand>
</feature>
<feature type="binding site" evidence="2">
    <location>
        <position position="21"/>
    </location>
    <ligand>
        <name>Mg(2+)</name>
        <dbReference type="ChEBI" id="CHEBI:18420"/>
    </ligand>
</feature>
<feature type="binding site" evidence="2">
    <location>
        <begin position="91"/>
        <end position="95"/>
    </location>
    <ligand>
        <name>GTP</name>
        <dbReference type="ChEBI" id="CHEBI:37565"/>
    </ligand>
</feature>
<feature type="binding site" evidence="2">
    <location>
        <begin position="148"/>
        <end position="151"/>
    </location>
    <ligand>
        <name>GTP</name>
        <dbReference type="ChEBI" id="CHEBI:37565"/>
    </ligand>
</feature>
<reference key="1">
    <citation type="journal article" date="2004" name="Proc. Natl. Acad. Sci. U.S.A.">
        <title>Genome sequence of Picrophilus torridus and its implications for life around pH 0.</title>
        <authorList>
            <person name="Fuetterer O."/>
            <person name="Angelov A."/>
            <person name="Liesegang H."/>
            <person name="Gottschalk G."/>
            <person name="Schleper C."/>
            <person name="Schepers B."/>
            <person name="Dock C."/>
            <person name="Antranikian G."/>
            <person name="Liebl W."/>
        </authorList>
    </citation>
    <scope>NUCLEOTIDE SEQUENCE [LARGE SCALE GENOMIC DNA]</scope>
    <source>
        <strain>ATCC 700027 / DSM 9790 / JCM 10055 / NBRC 100828 / KAW 2/3</strain>
    </source>
</reference>